<comment type="function">
    <text evidence="1">This is one of the proteins that bind and probably mediate the attachment of the 5S RNA into the large ribosomal subunit, where it forms part of the central protuberance. In the 70S ribosome it contacts protein S13 of the 30S subunit (bridge B1b), connecting the 2 subunits; this bridge is implicated in subunit movement. Contacts the P site tRNA; the 5S rRNA and some of its associated proteins might help stabilize positioning of ribosome-bound tRNAs.</text>
</comment>
<comment type="subunit">
    <text evidence="1">Part of the 50S ribosomal subunit; part of the 5S rRNA/L5/L18/L25 subcomplex. Contacts the 5S rRNA and the P site tRNA. Forms a bridge to the 30S subunit in the 70S ribosome.</text>
</comment>
<comment type="similarity">
    <text evidence="1">Belongs to the universal ribosomal protein uL5 family.</text>
</comment>
<gene>
    <name evidence="1" type="primary">rplE</name>
    <name type="ordered locus">SAR2323</name>
</gene>
<feature type="chain" id="PRO_0000124989" description="Large ribosomal subunit protein uL5">
    <location>
        <begin position="1"/>
        <end position="179"/>
    </location>
</feature>
<reference key="1">
    <citation type="journal article" date="2004" name="Proc. Natl. Acad. Sci. U.S.A.">
        <title>Complete genomes of two clinical Staphylococcus aureus strains: evidence for the rapid evolution of virulence and drug resistance.</title>
        <authorList>
            <person name="Holden M.T.G."/>
            <person name="Feil E.J."/>
            <person name="Lindsay J.A."/>
            <person name="Peacock S.J."/>
            <person name="Day N.P.J."/>
            <person name="Enright M.C."/>
            <person name="Foster T.J."/>
            <person name="Moore C.E."/>
            <person name="Hurst L."/>
            <person name="Atkin R."/>
            <person name="Barron A."/>
            <person name="Bason N."/>
            <person name="Bentley S.D."/>
            <person name="Chillingworth C."/>
            <person name="Chillingworth T."/>
            <person name="Churcher C."/>
            <person name="Clark L."/>
            <person name="Corton C."/>
            <person name="Cronin A."/>
            <person name="Doggett J."/>
            <person name="Dowd L."/>
            <person name="Feltwell T."/>
            <person name="Hance Z."/>
            <person name="Harris B."/>
            <person name="Hauser H."/>
            <person name="Holroyd S."/>
            <person name="Jagels K."/>
            <person name="James K.D."/>
            <person name="Lennard N."/>
            <person name="Line A."/>
            <person name="Mayes R."/>
            <person name="Moule S."/>
            <person name="Mungall K."/>
            <person name="Ormond D."/>
            <person name="Quail M.A."/>
            <person name="Rabbinowitsch E."/>
            <person name="Rutherford K.M."/>
            <person name="Sanders M."/>
            <person name="Sharp S."/>
            <person name="Simmonds M."/>
            <person name="Stevens K."/>
            <person name="Whitehead S."/>
            <person name="Barrell B.G."/>
            <person name="Spratt B.G."/>
            <person name="Parkhill J."/>
        </authorList>
    </citation>
    <scope>NUCLEOTIDE SEQUENCE [LARGE SCALE GENOMIC DNA]</scope>
    <source>
        <strain>MRSA252</strain>
    </source>
</reference>
<accession>Q6GEJ5</accession>
<protein>
    <recommendedName>
        <fullName evidence="1">Large ribosomal subunit protein uL5</fullName>
    </recommendedName>
    <alternativeName>
        <fullName evidence="2">50S ribosomal protein L5</fullName>
    </alternativeName>
</protein>
<evidence type="ECO:0000255" key="1">
    <source>
        <dbReference type="HAMAP-Rule" id="MF_01333"/>
    </source>
</evidence>
<evidence type="ECO:0000305" key="2"/>
<dbReference type="EMBL" id="BX571856">
    <property type="protein sequence ID" value="CAG41304.1"/>
    <property type="molecule type" value="Genomic_DNA"/>
</dbReference>
<dbReference type="RefSeq" id="WP_001080824.1">
    <property type="nucleotide sequence ID" value="NC_002952.2"/>
</dbReference>
<dbReference type="SMR" id="Q6GEJ5"/>
<dbReference type="KEGG" id="sar:SAR2323"/>
<dbReference type="HOGENOM" id="CLU_061015_2_1_9"/>
<dbReference type="Proteomes" id="UP000000596">
    <property type="component" value="Chromosome"/>
</dbReference>
<dbReference type="GO" id="GO:1990904">
    <property type="term" value="C:ribonucleoprotein complex"/>
    <property type="evidence" value="ECO:0007669"/>
    <property type="project" value="UniProtKB-KW"/>
</dbReference>
<dbReference type="GO" id="GO:0005840">
    <property type="term" value="C:ribosome"/>
    <property type="evidence" value="ECO:0007669"/>
    <property type="project" value="UniProtKB-KW"/>
</dbReference>
<dbReference type="GO" id="GO:0019843">
    <property type="term" value="F:rRNA binding"/>
    <property type="evidence" value="ECO:0007669"/>
    <property type="project" value="UniProtKB-UniRule"/>
</dbReference>
<dbReference type="GO" id="GO:0003735">
    <property type="term" value="F:structural constituent of ribosome"/>
    <property type="evidence" value="ECO:0007669"/>
    <property type="project" value="InterPro"/>
</dbReference>
<dbReference type="GO" id="GO:0000049">
    <property type="term" value="F:tRNA binding"/>
    <property type="evidence" value="ECO:0007669"/>
    <property type="project" value="UniProtKB-UniRule"/>
</dbReference>
<dbReference type="GO" id="GO:0006412">
    <property type="term" value="P:translation"/>
    <property type="evidence" value="ECO:0007669"/>
    <property type="project" value="UniProtKB-UniRule"/>
</dbReference>
<dbReference type="FunFam" id="3.30.1440.10:FF:000001">
    <property type="entry name" value="50S ribosomal protein L5"/>
    <property type="match status" value="1"/>
</dbReference>
<dbReference type="Gene3D" id="3.30.1440.10">
    <property type="match status" value="1"/>
</dbReference>
<dbReference type="HAMAP" id="MF_01333_B">
    <property type="entry name" value="Ribosomal_uL5_B"/>
    <property type="match status" value="1"/>
</dbReference>
<dbReference type="InterPro" id="IPR002132">
    <property type="entry name" value="Ribosomal_uL5"/>
</dbReference>
<dbReference type="InterPro" id="IPR020930">
    <property type="entry name" value="Ribosomal_uL5_bac-type"/>
</dbReference>
<dbReference type="InterPro" id="IPR031309">
    <property type="entry name" value="Ribosomal_uL5_C"/>
</dbReference>
<dbReference type="InterPro" id="IPR020929">
    <property type="entry name" value="Ribosomal_uL5_CS"/>
</dbReference>
<dbReference type="InterPro" id="IPR022803">
    <property type="entry name" value="Ribosomal_uL5_dom_sf"/>
</dbReference>
<dbReference type="InterPro" id="IPR031310">
    <property type="entry name" value="Ribosomal_uL5_N"/>
</dbReference>
<dbReference type="NCBIfam" id="NF000585">
    <property type="entry name" value="PRK00010.1"/>
    <property type="match status" value="1"/>
</dbReference>
<dbReference type="PANTHER" id="PTHR11994">
    <property type="entry name" value="60S RIBOSOMAL PROTEIN L11-RELATED"/>
    <property type="match status" value="1"/>
</dbReference>
<dbReference type="Pfam" id="PF00281">
    <property type="entry name" value="Ribosomal_L5"/>
    <property type="match status" value="1"/>
</dbReference>
<dbReference type="Pfam" id="PF00673">
    <property type="entry name" value="Ribosomal_L5_C"/>
    <property type="match status" value="1"/>
</dbReference>
<dbReference type="PIRSF" id="PIRSF002161">
    <property type="entry name" value="Ribosomal_L5"/>
    <property type="match status" value="1"/>
</dbReference>
<dbReference type="SUPFAM" id="SSF55282">
    <property type="entry name" value="RL5-like"/>
    <property type="match status" value="1"/>
</dbReference>
<dbReference type="PROSITE" id="PS00358">
    <property type="entry name" value="RIBOSOMAL_L5"/>
    <property type="match status" value="1"/>
</dbReference>
<name>RL5_STAAR</name>
<keyword id="KW-0687">Ribonucleoprotein</keyword>
<keyword id="KW-0689">Ribosomal protein</keyword>
<keyword id="KW-0694">RNA-binding</keyword>
<keyword id="KW-0699">rRNA-binding</keyword>
<keyword id="KW-0820">tRNA-binding</keyword>
<sequence length="179" mass="20267">MNRLKEKFNTEVTENLMKKFNYSSVMEVPKIDKIVVNMGVGDAVQNSKVLDNAVEELELITGQKPLVTKAKKSIATFRLREGMPIGAKVTLRGERMYEFLDKLISVSLPRVRDFQGVSKKAFDGRGNYTLGVKEQLIFPEIDYDKVSKVRGMDIVIVTTANTDEEARELLANFGMPFRK</sequence>
<organism>
    <name type="scientific">Staphylococcus aureus (strain MRSA252)</name>
    <dbReference type="NCBI Taxonomy" id="282458"/>
    <lineage>
        <taxon>Bacteria</taxon>
        <taxon>Bacillati</taxon>
        <taxon>Bacillota</taxon>
        <taxon>Bacilli</taxon>
        <taxon>Bacillales</taxon>
        <taxon>Staphylococcaceae</taxon>
        <taxon>Staphylococcus</taxon>
    </lineage>
</organism>
<proteinExistence type="inferred from homology"/>